<sequence>MKSVITTTISAADAAGRFPSSSDLESVQGNIQRAAARLEAAEKLASNHEAVVKEAGDACFAKYSYLKNPGEAGDSQEKVNKCYRDVDHYMRLVNYCLVVGGTGPVDEWGIAGAREVYRTLNLPTSAYVASFAFARDRLCVPRDMSAQAGVEYAGNLDYIINSLC</sequence>
<comment type="function">
    <text evidence="1">Light-harvesting photosynthetic bile pigment-protein from the phycobiliprotein complex.</text>
</comment>
<comment type="subunit">
    <text>Heterodimer of an alpha and a beta chain.</text>
</comment>
<comment type="subcellular location">
    <subcellularLocation>
        <location evidence="1">Plastid</location>
        <location evidence="1">Chloroplast thylakoid membrane</location>
        <topology evidence="1">Peripheral membrane protein</topology>
        <orientation evidence="1">Stromal side</orientation>
    </subcellularLocation>
    <text evidence="1">Forms the periphery of the phycobilisome rod.</text>
</comment>
<comment type="PTM">
    <text evidence="1">Contains two covalently linked bilin chromophores.</text>
</comment>
<comment type="similarity">
    <text evidence="2">Belongs to the phycobiliprotein family.</text>
</comment>
<dbReference type="EMBL" id="U38804">
    <property type="protein sequence ID" value="AAC08254.1"/>
    <property type="molecule type" value="Genomic_DNA"/>
</dbReference>
<dbReference type="PIR" id="S73289">
    <property type="entry name" value="S73289"/>
</dbReference>
<dbReference type="RefSeq" id="NP_053978.1">
    <property type="nucleotide sequence ID" value="NC_000925.1"/>
</dbReference>
<dbReference type="SMR" id="P51368"/>
<dbReference type="GeneID" id="810008"/>
<dbReference type="GO" id="GO:0009535">
    <property type="term" value="C:chloroplast thylakoid membrane"/>
    <property type="evidence" value="ECO:0007669"/>
    <property type="project" value="UniProtKB-SubCell"/>
</dbReference>
<dbReference type="GO" id="GO:0030089">
    <property type="term" value="C:phycobilisome"/>
    <property type="evidence" value="ECO:0007669"/>
    <property type="project" value="UniProtKB-KW"/>
</dbReference>
<dbReference type="GO" id="GO:0015979">
    <property type="term" value="P:photosynthesis"/>
    <property type="evidence" value="ECO:0007669"/>
    <property type="project" value="UniProtKB-KW"/>
</dbReference>
<dbReference type="CDD" id="cd14769">
    <property type="entry name" value="PE_alpha"/>
    <property type="match status" value="1"/>
</dbReference>
<dbReference type="Gene3D" id="1.10.490.20">
    <property type="entry name" value="Phycocyanins"/>
    <property type="match status" value="1"/>
</dbReference>
<dbReference type="InterPro" id="IPR009050">
    <property type="entry name" value="Globin-like_sf"/>
</dbReference>
<dbReference type="InterPro" id="IPR012128">
    <property type="entry name" value="Phycobilisome_asu/bsu"/>
</dbReference>
<dbReference type="InterPro" id="IPR038719">
    <property type="entry name" value="Phycobilisome_asu/bsu_sf"/>
</dbReference>
<dbReference type="PANTHER" id="PTHR34011:SF4">
    <property type="entry name" value="C-PHYCOCYANIN ALPHA SUBUNIT"/>
    <property type="match status" value="1"/>
</dbReference>
<dbReference type="PANTHER" id="PTHR34011">
    <property type="entry name" value="PHYCOBILISOME 32.1 KDA LINKER POLYPEPTIDE, PHYCOCYANIN-ASSOCIATED, ROD 2-RELATED"/>
    <property type="match status" value="1"/>
</dbReference>
<dbReference type="Pfam" id="PF00502">
    <property type="entry name" value="Phycobilisome"/>
    <property type="match status" value="1"/>
</dbReference>
<dbReference type="PIRSF" id="PIRSF000081">
    <property type="entry name" value="Phycocyanin"/>
    <property type="match status" value="1"/>
</dbReference>
<dbReference type="SUPFAM" id="SSF46458">
    <property type="entry name" value="Globin-like"/>
    <property type="match status" value="1"/>
</dbReference>
<evidence type="ECO:0000250" key="1"/>
<evidence type="ECO:0000305" key="2"/>
<geneLocation type="chloroplast"/>
<proteinExistence type="inferred from homology"/>
<organism>
    <name type="scientific">Porphyra purpurea</name>
    <name type="common">Red seaweed</name>
    <name type="synonym">Ulva purpurea</name>
    <dbReference type="NCBI Taxonomy" id="2787"/>
    <lineage>
        <taxon>Eukaryota</taxon>
        <taxon>Rhodophyta</taxon>
        <taxon>Bangiophyceae</taxon>
        <taxon>Bangiales</taxon>
        <taxon>Bangiaceae</taxon>
        <taxon>Porphyra</taxon>
    </lineage>
</organism>
<protein>
    <recommendedName>
        <fullName>R-phycoerythrin alpha chain</fullName>
    </recommendedName>
</protein>
<name>PHEA_PORPU</name>
<feature type="chain" id="PRO_0000199177" description="R-phycoerythrin alpha chain">
    <location>
        <begin position="1"/>
        <end position="164"/>
    </location>
</feature>
<feature type="binding site" description="covalent" evidence="1">
    <location>
        <position position="82"/>
    </location>
    <ligand>
        <name>(2R,3E)-phycoerythrobilin</name>
        <dbReference type="ChEBI" id="CHEBI:85276"/>
        <label>1</label>
    </ligand>
</feature>
<feature type="binding site" description="covalent" evidence="1">
    <location>
        <position position="139"/>
    </location>
    <ligand>
        <name>(2R,3E)-phycoerythrobilin</name>
        <dbReference type="ChEBI" id="CHEBI:85276"/>
        <label>2</label>
    </ligand>
</feature>
<keyword id="KW-0042">Antenna complex</keyword>
<keyword id="KW-0089">Bile pigment</keyword>
<keyword id="KW-0150">Chloroplast</keyword>
<keyword id="KW-0157">Chromophore</keyword>
<keyword id="KW-0249">Electron transport</keyword>
<keyword id="KW-0472">Membrane</keyword>
<keyword id="KW-0602">Photosynthesis</keyword>
<keyword id="KW-0605">Phycobilisome</keyword>
<keyword id="KW-0934">Plastid</keyword>
<keyword id="KW-0793">Thylakoid</keyword>
<keyword id="KW-0813">Transport</keyword>
<accession>P51368</accession>
<reference key="1">
    <citation type="journal article" date="1995" name="Plant Mol. Biol. Rep.">
        <title>Complete nucleotide sequence of the Porphyra purpurea chloroplast genome.</title>
        <authorList>
            <person name="Reith M.E."/>
            <person name="Munholland J."/>
        </authorList>
    </citation>
    <scope>NUCLEOTIDE SEQUENCE [LARGE SCALE GENOMIC DNA]</scope>
    <source>
        <strain>Avonport</strain>
    </source>
</reference>
<gene>
    <name type="primary">cpeA</name>
</gene>